<sequence>MLNLLYNQIFNVILNDVPTPYNTYFQDSATPNQEGILELHDNIMFYLLVILGLVSWLLFTITRTYSKNPIAYKYIKHGQTIEIIWTIFPAVILLIIAFPSFILLYLCDEVISPAMTIKAIGLQWYWKYEYSDFINDSGETVEFESYVIPEDLLEDGQLRLLDTDTSVVVPVDTHIRFVVTAADVIHDFAIPSLGIKVDAAPGRLNQVSALIQREGVFYGQCSELCGTAHSAMPIKIEAVSLPAFLEWLNEQ</sequence>
<dbReference type="EC" id="7.1.1.9"/>
<dbReference type="EMBL" id="X69431">
    <property type="protein sequence ID" value="CAA49206.1"/>
    <property type="molecule type" value="Genomic_DNA"/>
</dbReference>
<dbReference type="EMBL" id="AJ634268">
    <property type="protein sequence ID" value="CAG25605.1"/>
    <property type="molecule type" value="Genomic_DNA"/>
</dbReference>
<dbReference type="PIR" id="S45322">
    <property type="entry name" value="S45322"/>
</dbReference>
<dbReference type="RefSeq" id="YP_184727.1">
    <property type="nucleotide sequence ID" value="NC_006626.1"/>
</dbReference>
<dbReference type="SMR" id="P43376"/>
<dbReference type="FunCoup" id="P43376">
    <property type="interactions" value="246"/>
</dbReference>
<dbReference type="STRING" id="559295.P43376"/>
<dbReference type="GeneID" id="3239005"/>
<dbReference type="InParanoid" id="P43376"/>
<dbReference type="Proteomes" id="UP000002036">
    <property type="component" value="Mitochondrion"/>
</dbReference>
<dbReference type="GO" id="GO:0005743">
    <property type="term" value="C:mitochondrial inner membrane"/>
    <property type="evidence" value="ECO:0007669"/>
    <property type="project" value="UniProtKB-SubCell"/>
</dbReference>
<dbReference type="GO" id="GO:0005507">
    <property type="term" value="F:copper ion binding"/>
    <property type="evidence" value="ECO:0007669"/>
    <property type="project" value="InterPro"/>
</dbReference>
<dbReference type="GO" id="GO:0004129">
    <property type="term" value="F:cytochrome-c oxidase activity"/>
    <property type="evidence" value="ECO:0007669"/>
    <property type="project" value="UniProtKB-EC"/>
</dbReference>
<dbReference type="GO" id="GO:0042773">
    <property type="term" value="P:ATP synthesis coupled electron transport"/>
    <property type="evidence" value="ECO:0007669"/>
    <property type="project" value="TreeGrafter"/>
</dbReference>
<dbReference type="CDD" id="cd13912">
    <property type="entry name" value="CcO_II_C"/>
    <property type="match status" value="1"/>
</dbReference>
<dbReference type="FunFam" id="1.10.287.90:FF:000004">
    <property type="entry name" value="Cytochrome c oxidase subunit 2"/>
    <property type="match status" value="1"/>
</dbReference>
<dbReference type="FunFam" id="2.60.40.420:FF:000001">
    <property type="entry name" value="Cytochrome c oxidase subunit 2"/>
    <property type="match status" value="1"/>
</dbReference>
<dbReference type="Gene3D" id="1.10.287.90">
    <property type="match status" value="1"/>
</dbReference>
<dbReference type="Gene3D" id="2.60.40.420">
    <property type="entry name" value="Cupredoxins - blue copper proteins"/>
    <property type="match status" value="1"/>
</dbReference>
<dbReference type="InterPro" id="IPR045187">
    <property type="entry name" value="CcO_II"/>
</dbReference>
<dbReference type="InterPro" id="IPR002429">
    <property type="entry name" value="CcO_II-like_C"/>
</dbReference>
<dbReference type="InterPro" id="IPR034210">
    <property type="entry name" value="CcO_II_C"/>
</dbReference>
<dbReference type="InterPro" id="IPR001505">
    <property type="entry name" value="Copper_CuA"/>
</dbReference>
<dbReference type="InterPro" id="IPR008972">
    <property type="entry name" value="Cupredoxin"/>
</dbReference>
<dbReference type="InterPro" id="IPR014222">
    <property type="entry name" value="Cyt_c_oxidase_su2"/>
</dbReference>
<dbReference type="InterPro" id="IPR011759">
    <property type="entry name" value="Cyt_c_oxidase_su2_TM_dom"/>
</dbReference>
<dbReference type="InterPro" id="IPR036257">
    <property type="entry name" value="Cyt_c_oxidase_su2_TM_sf"/>
</dbReference>
<dbReference type="NCBIfam" id="TIGR02866">
    <property type="entry name" value="CoxB"/>
    <property type="match status" value="1"/>
</dbReference>
<dbReference type="PANTHER" id="PTHR22888:SF9">
    <property type="entry name" value="CYTOCHROME C OXIDASE SUBUNIT 2"/>
    <property type="match status" value="1"/>
</dbReference>
<dbReference type="PANTHER" id="PTHR22888">
    <property type="entry name" value="CYTOCHROME C OXIDASE, SUBUNIT II"/>
    <property type="match status" value="1"/>
</dbReference>
<dbReference type="Pfam" id="PF00116">
    <property type="entry name" value="COX2"/>
    <property type="match status" value="1"/>
</dbReference>
<dbReference type="Pfam" id="PF02790">
    <property type="entry name" value="COX2_TM"/>
    <property type="match status" value="1"/>
</dbReference>
<dbReference type="PRINTS" id="PR01166">
    <property type="entry name" value="CYCOXIDASEII"/>
</dbReference>
<dbReference type="SUPFAM" id="SSF49503">
    <property type="entry name" value="Cupredoxins"/>
    <property type="match status" value="1"/>
</dbReference>
<dbReference type="SUPFAM" id="SSF81464">
    <property type="entry name" value="Cytochrome c oxidase subunit II-like, transmembrane region"/>
    <property type="match status" value="1"/>
</dbReference>
<dbReference type="PROSITE" id="PS00078">
    <property type="entry name" value="COX2"/>
    <property type="match status" value="1"/>
</dbReference>
<dbReference type="PROSITE" id="PS50857">
    <property type="entry name" value="COX2_CUA"/>
    <property type="match status" value="1"/>
</dbReference>
<dbReference type="PROSITE" id="PS50999">
    <property type="entry name" value="COX2_TM"/>
    <property type="match status" value="1"/>
</dbReference>
<keyword id="KW-0186">Copper</keyword>
<keyword id="KW-0249">Electron transport</keyword>
<keyword id="KW-0460">Magnesium</keyword>
<keyword id="KW-0472">Membrane</keyword>
<keyword id="KW-0479">Metal-binding</keyword>
<keyword id="KW-0496">Mitochondrion</keyword>
<keyword id="KW-0999">Mitochondrion inner membrane</keyword>
<keyword id="KW-1185">Reference proteome</keyword>
<keyword id="KW-0679">Respiratory chain</keyword>
<keyword id="KW-0732">Signal</keyword>
<keyword id="KW-1278">Translocase</keyword>
<keyword id="KW-0812">Transmembrane</keyword>
<keyword id="KW-1133">Transmembrane helix</keyword>
<keyword id="KW-0813">Transport</keyword>
<comment type="function">
    <text evidence="2">Component of the cytochrome c oxidase, the last enzyme in the mitochondrial electron transport chain which drives oxidative phosphorylation. The respiratory chain contains 3 multisubunit complexes succinate dehydrogenase (complex II, CII), ubiquinol-cytochrome c oxidoreductase (cytochrome b-c1 complex, complex III, CIII) and cytochrome c oxidase (complex IV, CIV), that cooperate to transfer electrons derived from NADH and succinate to molecular oxygen, creating an electrochemical gradient over the inner membrane that drives transmembrane transport and the ATP synthase. Cytochrome c oxidase is the component of the respiratory chain that catalyzes the reduction of oxygen to water. Electrons originating from reduced cytochrome c in the intermembrane space (IMS) are transferred via the dinuclear copper A center (CU(A)) of subunit 2 and heme A of subunit 1 to the active site in subunit 1, a binuclear center (BNC) formed by heme A3 and copper B (CU(B)). The BNC reduces molecular oxygen to 2 water molecules using 4 electrons from cytochrome c in the IMS and 4 protons from the mitochondrial matrix.</text>
</comment>
<comment type="catalytic activity">
    <reaction evidence="2">
        <text>4 Fe(II)-[cytochrome c] + O2 + 8 H(+)(in) = 4 Fe(III)-[cytochrome c] + 2 H2O + 4 H(+)(out)</text>
        <dbReference type="Rhea" id="RHEA:11436"/>
        <dbReference type="Rhea" id="RHEA-COMP:10350"/>
        <dbReference type="Rhea" id="RHEA-COMP:14399"/>
        <dbReference type="ChEBI" id="CHEBI:15377"/>
        <dbReference type="ChEBI" id="CHEBI:15378"/>
        <dbReference type="ChEBI" id="CHEBI:15379"/>
        <dbReference type="ChEBI" id="CHEBI:29033"/>
        <dbReference type="ChEBI" id="CHEBI:29034"/>
        <dbReference type="EC" id="7.1.1.9"/>
    </reaction>
    <physiologicalReaction direction="left-to-right" evidence="2">
        <dbReference type="Rhea" id="RHEA:11437"/>
    </physiologicalReaction>
</comment>
<comment type="cofactor">
    <cofactor evidence="2">
        <name>Cu cation</name>
        <dbReference type="ChEBI" id="CHEBI:23378"/>
    </cofactor>
    <text evidence="2">Binds a dinuclear copper A center per subunit.</text>
</comment>
<comment type="subunit">
    <text evidence="2">Component of the cytochrome c oxidase (complex IV, CIV), a multisubunit enzyme composed of a catalytic core of 3 subunits and several supernumerary subunits. The complex exists as a monomer or a dimer and forms supercomplexes (SCs) in the inner mitochondrial membrane with ubiquinol-cytochrome c oxidoreductase (cytochrome b-c1 complex, complex III, CIII).</text>
</comment>
<comment type="subcellular location">
    <subcellularLocation>
        <location evidence="2">Mitochondrion inner membrane</location>
        <topology evidence="2">Multi-pass membrane protein</topology>
    </subcellularLocation>
</comment>
<comment type="PTM">
    <text evidence="1">The signal sequence of COX2 is processed by IMP1.</text>
</comment>
<comment type="similarity">
    <text evidence="4">Belongs to the cytochrome c oxidase subunit 2 family.</text>
</comment>
<proteinExistence type="inferred from homology"/>
<evidence type="ECO:0000250" key="1"/>
<evidence type="ECO:0000250" key="2">
    <source>
        <dbReference type="UniProtKB" id="P00410"/>
    </source>
</evidence>
<evidence type="ECO:0000255" key="3"/>
<evidence type="ECO:0000305" key="4"/>
<geneLocation type="mitochondrion"/>
<organism>
    <name type="scientific">Lachancea thermotolerans (strain ATCC 56472 / CBS 6340 / NRRL Y-8284)</name>
    <name type="common">Yeast</name>
    <name type="synonym">Kluyveromyces thermotolerans</name>
    <dbReference type="NCBI Taxonomy" id="559295"/>
    <lineage>
        <taxon>Eukaryota</taxon>
        <taxon>Fungi</taxon>
        <taxon>Dikarya</taxon>
        <taxon>Ascomycota</taxon>
        <taxon>Saccharomycotina</taxon>
        <taxon>Saccharomycetes</taxon>
        <taxon>Saccharomycetales</taxon>
        <taxon>Saccharomycetaceae</taxon>
        <taxon>Lachancea</taxon>
    </lineage>
</organism>
<feature type="signal peptide" evidence="1">
    <location>
        <begin position="1"/>
        <end position="15"/>
    </location>
</feature>
<feature type="chain" id="PRO_0000006040" description="Cytochrome c oxidase subunit 2">
    <location>
        <begin position="16"/>
        <end position="251"/>
    </location>
</feature>
<feature type="topological domain" description="Mitochondrial intermembrane" evidence="3">
    <location>
        <begin position="16"/>
        <end position="41"/>
    </location>
</feature>
<feature type="transmembrane region" description="Helical" evidence="3">
    <location>
        <begin position="42"/>
        <end position="62"/>
    </location>
</feature>
<feature type="topological domain" description="Mitochondrial matrix" evidence="3">
    <location>
        <begin position="63"/>
        <end position="82"/>
    </location>
</feature>
<feature type="transmembrane region" description="Helical" evidence="3">
    <location>
        <begin position="83"/>
        <end position="103"/>
    </location>
</feature>
<feature type="topological domain" description="Mitochondrial intermembrane" evidence="3">
    <location>
        <begin position="104"/>
        <end position="251"/>
    </location>
</feature>
<feature type="binding site" evidence="2">
    <location>
        <position position="186"/>
    </location>
    <ligand>
        <name>Cu cation</name>
        <dbReference type="ChEBI" id="CHEBI:23378"/>
        <label>A1</label>
    </ligand>
</feature>
<feature type="binding site" evidence="2">
    <location>
        <position position="221"/>
    </location>
    <ligand>
        <name>Cu cation</name>
        <dbReference type="ChEBI" id="CHEBI:23378"/>
        <label>A1</label>
    </ligand>
</feature>
<feature type="binding site" evidence="2">
    <location>
        <position position="221"/>
    </location>
    <ligand>
        <name>Cu cation</name>
        <dbReference type="ChEBI" id="CHEBI:23378"/>
        <label>A2</label>
    </ligand>
</feature>
<feature type="binding site" evidence="2">
    <location>
        <position position="223"/>
    </location>
    <ligand>
        <name>Cu cation</name>
        <dbReference type="ChEBI" id="CHEBI:23378"/>
        <label>A2</label>
    </ligand>
</feature>
<feature type="binding site" evidence="2">
    <location>
        <position position="223"/>
    </location>
    <ligand>
        <name>Mg(2+)</name>
        <dbReference type="ChEBI" id="CHEBI:18420"/>
        <note>ligand shared with subunit 1</note>
    </ligand>
</feature>
<feature type="binding site" evidence="2">
    <location>
        <position position="225"/>
    </location>
    <ligand>
        <name>Cu cation</name>
        <dbReference type="ChEBI" id="CHEBI:23378"/>
        <label>A1</label>
    </ligand>
</feature>
<feature type="binding site" evidence="2">
    <location>
        <position position="225"/>
    </location>
    <ligand>
        <name>Cu cation</name>
        <dbReference type="ChEBI" id="CHEBI:23378"/>
        <label>A2</label>
    </ligand>
</feature>
<feature type="binding site" evidence="2">
    <location>
        <position position="229"/>
    </location>
    <ligand>
        <name>Cu cation</name>
        <dbReference type="ChEBI" id="CHEBI:23378"/>
        <label>A2</label>
    </ligand>
</feature>
<feature type="binding site" evidence="2">
    <location>
        <position position="232"/>
    </location>
    <ligand>
        <name>Cu cation</name>
        <dbReference type="ChEBI" id="CHEBI:23378"/>
        <label>A1</label>
    </ligand>
</feature>
<name>COX2_LACTC</name>
<gene>
    <name type="primary">COX2</name>
</gene>
<accession>P43376</accession>
<accession>Q5K459</accession>
<reference key="1">
    <citation type="journal article" date="1994" name="J. Mol. Evol.">
        <title>The structure of the small mitochondrial DNA of Kluyveromyces thermotolerans is likely to reflect the ancestral gene order in fungi.</title>
        <authorList>
            <person name="Clark-Walker G.D."/>
            <person name="Weiller G.F."/>
        </authorList>
    </citation>
    <scope>NUCLEOTIDE SEQUENCE [GENOMIC DNA]</scope>
    <source>
        <strain>CBS 2803</strain>
    </source>
</reference>
<reference key="2">
    <citation type="journal article" date="2005" name="FEBS Lett.">
        <title>The complete mitochondrial genome of the yeast Kluyveromyces thermotolerans.</title>
        <authorList>
            <person name="Talla E."/>
            <person name="Anthouard V."/>
            <person name="Bouchier C."/>
            <person name="Frangeul L."/>
            <person name="Dujon B."/>
        </authorList>
    </citation>
    <scope>NUCLEOTIDE SEQUENCE [LARGE SCALE GENOMIC DNA]</scope>
    <source>
        <strain>ATCC 56472 / CBS 6340 / NRRL Y-8284</strain>
    </source>
</reference>
<protein>
    <recommendedName>
        <fullName>Cytochrome c oxidase subunit 2</fullName>
        <ecNumber>7.1.1.9</ecNumber>
    </recommendedName>
    <alternativeName>
        <fullName>Cytochrome c oxidase polypeptide II</fullName>
    </alternativeName>
</protein>